<evidence type="ECO:0000250" key="1"/>
<evidence type="ECO:0000255" key="2">
    <source>
        <dbReference type="PROSITE-ProRule" id="PRU00716"/>
    </source>
</evidence>
<evidence type="ECO:0000269" key="3">
    <source>
    </source>
</evidence>
<evidence type="ECO:0000303" key="4">
    <source>
    </source>
</evidence>
<evidence type="ECO:0000303" key="5">
    <source ref="1"/>
</evidence>
<evidence type="ECO:0000305" key="6"/>
<protein>
    <recommendedName>
        <fullName>NADH-cytochrome b5 reductase-like</fullName>
        <ecNumber>1.6.2.2</ecNumber>
    </recommendedName>
</protein>
<comment type="function">
    <text evidence="1">NADH-cytochrome b5 reductases are involved in desaturation and elongation of fatty acids, cholesterol biosynthesis, drug metabolism, and, in erythrocyte, methemoglobin reduction.</text>
</comment>
<comment type="catalytic activity">
    <reaction>
        <text>2 Fe(III)-[cytochrome b5] + NADH = 2 Fe(II)-[cytochrome b5] + NAD(+) + H(+)</text>
        <dbReference type="Rhea" id="RHEA:46680"/>
        <dbReference type="Rhea" id="RHEA-COMP:10438"/>
        <dbReference type="Rhea" id="RHEA-COMP:10439"/>
        <dbReference type="ChEBI" id="CHEBI:15378"/>
        <dbReference type="ChEBI" id="CHEBI:29033"/>
        <dbReference type="ChEBI" id="CHEBI:29034"/>
        <dbReference type="ChEBI" id="CHEBI:57540"/>
        <dbReference type="ChEBI" id="CHEBI:57945"/>
        <dbReference type="EC" id="1.6.2.2"/>
    </reaction>
</comment>
<comment type="cofactor">
    <cofactor evidence="1">
        <name>FAD</name>
        <dbReference type="ChEBI" id="CHEBI:57692"/>
    </cofactor>
</comment>
<comment type="alternative products">
    <event type="alternative splicing"/>
    <isoform>
        <id>Q6IPT4-1</id>
        <name>1</name>
        <sequence type="displayed"/>
    </isoform>
    <isoform>
        <id>Q6IPT4-3</id>
        <name>2</name>
        <sequence type="described" ref="VSP_033845"/>
    </isoform>
    <isoform>
        <id>Q6IPT4-4</id>
        <name>3</name>
        <sequence type="described" ref="VSP_040404"/>
    </isoform>
</comment>
<comment type="similarity">
    <text evidence="6">Belongs to the flavoprotein pyridine nucleotide cytochrome reductase family.</text>
</comment>
<comment type="caution">
    <text evidence="6">It is uncertain whether Met-1 or Met-2 is the initiator.</text>
</comment>
<comment type="sequence caution" evidence="6">
    <conflict type="erroneous initiation">
        <sequence resource="EMBL-CDS" id="BAC03437"/>
    </conflict>
    <text>Extended N-terminus.</text>
</comment>
<comment type="sequence caution" evidence="6">
    <conflict type="frameshift">
        <sequence resource="EMBL" id="CD515193"/>
    </conflict>
</comment>
<keyword id="KW-0025">Alternative splicing</keyword>
<keyword id="KW-0274">FAD</keyword>
<keyword id="KW-0285">Flavoprotein</keyword>
<keyword id="KW-0520">NAD</keyword>
<keyword id="KW-0560">Oxidoreductase</keyword>
<keyword id="KW-1267">Proteomics identification</keyword>
<keyword id="KW-1185">Reference proteome</keyword>
<accession>Q6IPT4</accession>
<accession>B7ZBS4</accession>
<accession>Q8NF25</accession>
<gene>
    <name type="primary">CYB5RL</name>
</gene>
<proteinExistence type="evidence at protein level"/>
<dbReference type="EC" id="1.6.2.2"/>
<dbReference type="EMBL" id="AK090456">
    <property type="protein sequence ID" value="BAC03437.1"/>
    <property type="status" value="ALT_INIT"/>
    <property type="molecule type" value="mRNA"/>
</dbReference>
<dbReference type="EMBL" id="AL357673">
    <property type="status" value="NOT_ANNOTATED_CDS"/>
    <property type="molecule type" value="Genomic_DNA"/>
</dbReference>
<dbReference type="EMBL" id="CD515193">
    <property type="status" value="NOT_ANNOTATED_CDS"/>
    <property type="molecule type" value="mRNA"/>
</dbReference>
<dbReference type="CCDS" id="CCDS44151.1">
    <molecule id="Q6IPT4-1"/>
</dbReference>
<dbReference type="RefSeq" id="NP_001026842.2">
    <molecule id="Q6IPT4-1"/>
    <property type="nucleotide sequence ID" value="NM_001031672.4"/>
</dbReference>
<dbReference type="RefSeq" id="NP_001340283.1">
    <molecule id="Q6IPT4-3"/>
    <property type="nucleotide sequence ID" value="NM_001353354.2"/>
</dbReference>
<dbReference type="SMR" id="Q6IPT4"/>
<dbReference type="FunCoup" id="Q6IPT4">
    <property type="interactions" value="346"/>
</dbReference>
<dbReference type="STRING" id="9606.ENSP00000434343"/>
<dbReference type="iPTMnet" id="Q6IPT4"/>
<dbReference type="PhosphoSitePlus" id="Q6IPT4"/>
<dbReference type="BioMuta" id="CYB5RL"/>
<dbReference type="DMDM" id="317373410"/>
<dbReference type="MassIVE" id="Q6IPT4"/>
<dbReference type="PaxDb" id="9606-ENSP00000434343"/>
<dbReference type="PeptideAtlas" id="Q6IPT4"/>
<dbReference type="ProteomicsDB" id="66459">
    <molecule id="Q6IPT4-1"/>
</dbReference>
<dbReference type="ProteomicsDB" id="66461">
    <molecule id="Q6IPT4-4"/>
</dbReference>
<dbReference type="Antibodypedia" id="46895">
    <property type="antibodies" value="25 antibodies from 10 providers"/>
</dbReference>
<dbReference type="DNASU" id="606495"/>
<dbReference type="Ensembl" id="ENST00000287899.13">
    <molecule id="Q6IPT4-4"/>
    <property type="protein sequence ID" value="ENSP00000287899.8"/>
    <property type="gene ID" value="ENSG00000215883.11"/>
</dbReference>
<dbReference type="Ensembl" id="ENST00000534324.6">
    <molecule id="Q6IPT4-1"/>
    <property type="protein sequence ID" value="ENSP00000434343.1"/>
    <property type="gene ID" value="ENSG00000215883.11"/>
</dbReference>
<dbReference type="GeneID" id="606495"/>
<dbReference type="KEGG" id="hsa:606495"/>
<dbReference type="MANE-Select" id="ENST00000534324.6">
    <property type="protein sequence ID" value="ENSP00000434343.1"/>
    <property type="RefSeq nucleotide sequence ID" value="NM_001031672.4"/>
    <property type="RefSeq protein sequence ID" value="NP_001026842.2"/>
</dbReference>
<dbReference type="UCSC" id="uc057gtt.1">
    <molecule id="Q6IPT4-1"/>
    <property type="organism name" value="human"/>
</dbReference>
<dbReference type="AGR" id="HGNC:32220"/>
<dbReference type="CTD" id="606495"/>
<dbReference type="GeneCards" id="CYB5RL"/>
<dbReference type="HGNC" id="HGNC:32220">
    <property type="gene designation" value="CYB5RL"/>
</dbReference>
<dbReference type="HPA" id="ENSG00000215883">
    <property type="expression patterns" value="Low tissue specificity"/>
</dbReference>
<dbReference type="neXtProt" id="NX_Q6IPT4"/>
<dbReference type="OpenTargets" id="ENSG00000215883"/>
<dbReference type="PharmGKB" id="PA164718527"/>
<dbReference type="VEuPathDB" id="HostDB:ENSG00000215883"/>
<dbReference type="eggNOG" id="KOG0534">
    <property type="taxonomic scope" value="Eukaryota"/>
</dbReference>
<dbReference type="GeneTree" id="ENSGT00920000149170"/>
<dbReference type="HOGENOM" id="CLU_003827_9_3_1"/>
<dbReference type="InParanoid" id="Q6IPT4"/>
<dbReference type="OMA" id="YSPYWTD"/>
<dbReference type="OrthoDB" id="432685at2759"/>
<dbReference type="PAN-GO" id="Q6IPT4">
    <property type="GO annotations" value="1 GO annotation based on evolutionary models"/>
</dbReference>
<dbReference type="PhylomeDB" id="Q6IPT4"/>
<dbReference type="TreeFam" id="TF336549"/>
<dbReference type="PathwayCommons" id="Q6IPT4"/>
<dbReference type="Reactome" id="R-HSA-1237044">
    <property type="pathway name" value="Erythrocytes take up carbon dioxide and release oxygen"/>
</dbReference>
<dbReference type="BioGRID-ORCS" id="606495">
    <property type="hits" value="17 hits in 1157 CRISPR screens"/>
</dbReference>
<dbReference type="ChiTaRS" id="CYB5RL">
    <property type="organism name" value="human"/>
</dbReference>
<dbReference type="GenomeRNAi" id="606495"/>
<dbReference type="Pharos" id="Q6IPT4">
    <property type="development level" value="Tdark"/>
</dbReference>
<dbReference type="PRO" id="PR:Q6IPT4"/>
<dbReference type="Proteomes" id="UP000005640">
    <property type="component" value="Chromosome 1"/>
</dbReference>
<dbReference type="RNAct" id="Q6IPT4">
    <property type="molecule type" value="protein"/>
</dbReference>
<dbReference type="Bgee" id="ENSG00000215883">
    <property type="expression patterns" value="Expressed in primordial germ cell in gonad and 189 other cell types or tissues"/>
</dbReference>
<dbReference type="ExpressionAtlas" id="Q6IPT4">
    <property type="expression patterns" value="baseline and differential"/>
</dbReference>
<dbReference type="GO" id="GO:0005789">
    <property type="term" value="C:endoplasmic reticulum membrane"/>
    <property type="evidence" value="ECO:0000304"/>
    <property type="project" value="Reactome"/>
</dbReference>
<dbReference type="GO" id="GO:0005654">
    <property type="term" value="C:nucleoplasm"/>
    <property type="evidence" value="ECO:0000314"/>
    <property type="project" value="HPA"/>
</dbReference>
<dbReference type="GO" id="GO:0004128">
    <property type="term" value="F:cytochrome-b5 reductase activity, acting on NAD(P)H"/>
    <property type="evidence" value="ECO:0000304"/>
    <property type="project" value="Reactome"/>
</dbReference>
<dbReference type="GO" id="GO:0015701">
    <property type="term" value="P:bicarbonate transport"/>
    <property type="evidence" value="ECO:0000304"/>
    <property type="project" value="Reactome"/>
</dbReference>
<dbReference type="CDD" id="cd06183">
    <property type="entry name" value="cyt_b5_reduct_like"/>
    <property type="match status" value="1"/>
</dbReference>
<dbReference type="FunFam" id="2.40.30.10:FF:000105">
    <property type="entry name" value="NADH-cytochrome b5 reductase"/>
    <property type="match status" value="1"/>
</dbReference>
<dbReference type="FunFam" id="3.40.50.80:FF:000043">
    <property type="entry name" value="NADH-cytochrome b5 reductase"/>
    <property type="match status" value="1"/>
</dbReference>
<dbReference type="Gene3D" id="3.40.50.80">
    <property type="entry name" value="Nucleotide-binding domain of ferredoxin-NADP reductase (FNR) module"/>
    <property type="match status" value="1"/>
</dbReference>
<dbReference type="Gene3D" id="2.40.30.10">
    <property type="entry name" value="Translation factors"/>
    <property type="match status" value="1"/>
</dbReference>
<dbReference type="InterPro" id="IPR001834">
    <property type="entry name" value="CBR-like"/>
</dbReference>
<dbReference type="InterPro" id="IPR008333">
    <property type="entry name" value="Cbr1-like_FAD-bd_dom"/>
</dbReference>
<dbReference type="InterPro" id="IPR017927">
    <property type="entry name" value="FAD-bd_FR_type"/>
</dbReference>
<dbReference type="InterPro" id="IPR039261">
    <property type="entry name" value="FNR_nucleotide-bd"/>
</dbReference>
<dbReference type="InterPro" id="IPR019180">
    <property type="entry name" value="Oxidoreductase-like_N"/>
</dbReference>
<dbReference type="InterPro" id="IPR001433">
    <property type="entry name" value="OxRdtase_FAD/NAD-bd"/>
</dbReference>
<dbReference type="InterPro" id="IPR017938">
    <property type="entry name" value="Riboflavin_synthase-like_b-brl"/>
</dbReference>
<dbReference type="PANTHER" id="PTHR19370">
    <property type="entry name" value="NADH-CYTOCHROME B5 REDUCTASE"/>
    <property type="match status" value="1"/>
</dbReference>
<dbReference type="PANTHER" id="PTHR19370:SF184">
    <property type="entry name" value="NADH-CYTOCHROME B5 REDUCTASE-LIKE"/>
    <property type="match status" value="1"/>
</dbReference>
<dbReference type="Pfam" id="PF00970">
    <property type="entry name" value="FAD_binding_6"/>
    <property type="match status" value="1"/>
</dbReference>
<dbReference type="Pfam" id="PF00175">
    <property type="entry name" value="NAD_binding_1"/>
    <property type="match status" value="1"/>
</dbReference>
<dbReference type="Pfam" id="PF09791">
    <property type="entry name" value="Oxidored-like"/>
    <property type="match status" value="1"/>
</dbReference>
<dbReference type="PRINTS" id="PR00406">
    <property type="entry name" value="CYTB5RDTASE"/>
</dbReference>
<dbReference type="SUPFAM" id="SSF52343">
    <property type="entry name" value="Ferredoxin reductase-like, C-terminal NADP-linked domain"/>
    <property type="match status" value="1"/>
</dbReference>
<dbReference type="SUPFAM" id="SSF63380">
    <property type="entry name" value="Riboflavin synthase domain-like"/>
    <property type="match status" value="1"/>
</dbReference>
<dbReference type="PROSITE" id="PS51384">
    <property type="entry name" value="FAD_FR"/>
    <property type="match status" value="1"/>
</dbReference>
<name>NB5R5_HUMAN</name>
<sequence length="315" mass="35892">MMAEREEDDDTEEAWMQLRPTEPLPSQCCGSGCSPCVFDLYHRDLARWEAAQASKDRSLLRGPESQSCPSKLNPETFVAFCIIAMDRLTKDTYRVRFALPGNSQLGLRPGQHLILRGIVDDLEIQRAYTPISPANAEGYFEVLIKCYQMGLMSRYVESWRVGDTAFWRGPFGDFFYKPNQYGELLLLAAGTGLAPMVPILQSITDNENDETFVTLVGCFKTFESIYLKTFLQEQARFWNVRTFFVLSQESSSEQLPWSYQEKTHFGHLGQDLIKELVSCCRRKPFALVCGSAEFTKDIARCLLCAGLTEDSYFLF</sequence>
<organism>
    <name type="scientific">Homo sapiens</name>
    <name type="common">Human</name>
    <dbReference type="NCBI Taxonomy" id="9606"/>
    <lineage>
        <taxon>Eukaryota</taxon>
        <taxon>Metazoa</taxon>
        <taxon>Chordata</taxon>
        <taxon>Craniata</taxon>
        <taxon>Vertebrata</taxon>
        <taxon>Euteleostomi</taxon>
        <taxon>Mammalia</taxon>
        <taxon>Eutheria</taxon>
        <taxon>Euarchontoglires</taxon>
        <taxon>Primates</taxon>
        <taxon>Haplorrhini</taxon>
        <taxon>Catarrhini</taxon>
        <taxon>Hominidae</taxon>
        <taxon>Homo</taxon>
    </lineage>
</organism>
<feature type="chain" id="PRO_0000337041" description="NADH-cytochrome b5 reductase-like">
    <location>
        <begin position="1"/>
        <end position="315"/>
    </location>
</feature>
<feature type="domain" description="Oxidoreductase-like">
    <location>
        <begin position="19"/>
        <end position="55"/>
    </location>
</feature>
<feature type="domain" description="FAD-binding FR-type" evidence="2">
    <location>
        <begin position="75"/>
        <end position="177"/>
    </location>
</feature>
<feature type="binding site" evidence="1">
    <location>
        <begin position="157"/>
        <end position="172"/>
    </location>
    <ligand>
        <name>FAD</name>
        <dbReference type="ChEBI" id="CHEBI:57692"/>
    </ligand>
</feature>
<feature type="binding site" evidence="1">
    <location>
        <begin position="182"/>
        <end position="214"/>
    </location>
    <ligand>
        <name>FAD</name>
        <dbReference type="ChEBI" id="CHEBI:57692"/>
    </ligand>
</feature>
<feature type="splice variant" id="VSP_033845" description="In isoform 2." evidence="5">
    <location>
        <begin position="1"/>
        <end position="148"/>
    </location>
</feature>
<feature type="splice variant" id="VSP_040404" description="In isoform 3." evidence="4">
    <location>
        <begin position="180"/>
        <end position="247"/>
    </location>
</feature>
<feature type="sequence variant" id="VAR_043577" description="In dbSNP:rs946448." evidence="3">
    <original>R</original>
    <variation>K</variation>
    <location>
        <position position="47"/>
    </location>
</feature>
<feature type="sequence conflict" description="In Ref. 3; CD515193." evidence="6" ref="3">
    <original>H</original>
    <variation>P</variation>
    <location>
        <position position="267"/>
    </location>
</feature>
<feature type="sequence conflict" description="In Ref. 3; CD515193." evidence="6" ref="3">
    <original>C</original>
    <variation>W</variation>
    <location>
        <position position="301"/>
    </location>
</feature>
<reference key="1">
    <citation type="submission" date="2002-07" db="EMBL/GenBank/DDBJ databases">
        <title>The nucleotide sequence of a long cDNA clone isolated from human spleen.</title>
        <authorList>
            <person name="Jikuya H."/>
            <person name="Takano J."/>
            <person name="Kikuno R."/>
            <person name="Nagase T."/>
            <person name="Ohara O."/>
        </authorList>
    </citation>
    <scope>NUCLEOTIDE SEQUENCE [LARGE SCALE MRNA] (ISOFORM 2)</scope>
    <source>
        <tissue>Spleen</tissue>
    </source>
</reference>
<reference key="2">
    <citation type="journal article" date="2006" name="Nature">
        <title>The DNA sequence and biological annotation of human chromosome 1.</title>
        <authorList>
            <person name="Gregory S.G."/>
            <person name="Barlow K.F."/>
            <person name="McLay K.E."/>
            <person name="Kaul R."/>
            <person name="Swarbreck D."/>
            <person name="Dunham A."/>
            <person name="Scott C.E."/>
            <person name="Howe K.L."/>
            <person name="Woodfine K."/>
            <person name="Spencer C.C.A."/>
            <person name="Jones M.C."/>
            <person name="Gillson C."/>
            <person name="Searle S."/>
            <person name="Zhou Y."/>
            <person name="Kokocinski F."/>
            <person name="McDonald L."/>
            <person name="Evans R."/>
            <person name="Phillips K."/>
            <person name="Atkinson A."/>
            <person name="Cooper R."/>
            <person name="Jones C."/>
            <person name="Hall R.E."/>
            <person name="Andrews T.D."/>
            <person name="Lloyd C."/>
            <person name="Ainscough R."/>
            <person name="Almeida J.P."/>
            <person name="Ambrose K.D."/>
            <person name="Anderson F."/>
            <person name="Andrew R.W."/>
            <person name="Ashwell R.I.S."/>
            <person name="Aubin K."/>
            <person name="Babbage A.K."/>
            <person name="Bagguley C.L."/>
            <person name="Bailey J."/>
            <person name="Beasley H."/>
            <person name="Bethel G."/>
            <person name="Bird C.P."/>
            <person name="Bray-Allen S."/>
            <person name="Brown J.Y."/>
            <person name="Brown A.J."/>
            <person name="Buckley D."/>
            <person name="Burton J."/>
            <person name="Bye J."/>
            <person name="Carder C."/>
            <person name="Chapman J.C."/>
            <person name="Clark S.Y."/>
            <person name="Clarke G."/>
            <person name="Clee C."/>
            <person name="Cobley V."/>
            <person name="Collier R.E."/>
            <person name="Corby N."/>
            <person name="Coville G.J."/>
            <person name="Davies J."/>
            <person name="Deadman R."/>
            <person name="Dunn M."/>
            <person name="Earthrowl M."/>
            <person name="Ellington A.G."/>
            <person name="Errington H."/>
            <person name="Frankish A."/>
            <person name="Frankland J."/>
            <person name="French L."/>
            <person name="Garner P."/>
            <person name="Garnett J."/>
            <person name="Gay L."/>
            <person name="Ghori M.R.J."/>
            <person name="Gibson R."/>
            <person name="Gilby L.M."/>
            <person name="Gillett W."/>
            <person name="Glithero R.J."/>
            <person name="Grafham D.V."/>
            <person name="Griffiths C."/>
            <person name="Griffiths-Jones S."/>
            <person name="Grocock R."/>
            <person name="Hammond S."/>
            <person name="Harrison E.S.I."/>
            <person name="Hart E."/>
            <person name="Haugen E."/>
            <person name="Heath P.D."/>
            <person name="Holmes S."/>
            <person name="Holt K."/>
            <person name="Howden P.J."/>
            <person name="Hunt A.R."/>
            <person name="Hunt S.E."/>
            <person name="Hunter G."/>
            <person name="Isherwood J."/>
            <person name="James R."/>
            <person name="Johnson C."/>
            <person name="Johnson D."/>
            <person name="Joy A."/>
            <person name="Kay M."/>
            <person name="Kershaw J.K."/>
            <person name="Kibukawa M."/>
            <person name="Kimberley A.M."/>
            <person name="King A."/>
            <person name="Knights A.J."/>
            <person name="Lad H."/>
            <person name="Laird G."/>
            <person name="Lawlor S."/>
            <person name="Leongamornlert D.A."/>
            <person name="Lloyd D.M."/>
            <person name="Loveland J."/>
            <person name="Lovell J."/>
            <person name="Lush M.J."/>
            <person name="Lyne R."/>
            <person name="Martin S."/>
            <person name="Mashreghi-Mohammadi M."/>
            <person name="Matthews L."/>
            <person name="Matthews N.S.W."/>
            <person name="McLaren S."/>
            <person name="Milne S."/>
            <person name="Mistry S."/>
            <person name="Moore M.J.F."/>
            <person name="Nickerson T."/>
            <person name="O'Dell C.N."/>
            <person name="Oliver K."/>
            <person name="Palmeiri A."/>
            <person name="Palmer S.A."/>
            <person name="Parker A."/>
            <person name="Patel D."/>
            <person name="Pearce A.V."/>
            <person name="Peck A.I."/>
            <person name="Pelan S."/>
            <person name="Phelps K."/>
            <person name="Phillimore B.J."/>
            <person name="Plumb R."/>
            <person name="Rajan J."/>
            <person name="Raymond C."/>
            <person name="Rouse G."/>
            <person name="Saenphimmachak C."/>
            <person name="Sehra H.K."/>
            <person name="Sheridan E."/>
            <person name="Shownkeen R."/>
            <person name="Sims S."/>
            <person name="Skuce C.D."/>
            <person name="Smith M."/>
            <person name="Steward C."/>
            <person name="Subramanian S."/>
            <person name="Sycamore N."/>
            <person name="Tracey A."/>
            <person name="Tromans A."/>
            <person name="Van Helmond Z."/>
            <person name="Wall M."/>
            <person name="Wallis J.M."/>
            <person name="White S."/>
            <person name="Whitehead S.L."/>
            <person name="Wilkinson J.E."/>
            <person name="Willey D.L."/>
            <person name="Williams H."/>
            <person name="Wilming L."/>
            <person name="Wray P.W."/>
            <person name="Wu Z."/>
            <person name="Coulson A."/>
            <person name="Vaudin M."/>
            <person name="Sulston J.E."/>
            <person name="Durbin R.M."/>
            <person name="Hubbard T."/>
            <person name="Wooster R."/>
            <person name="Dunham I."/>
            <person name="Carter N.P."/>
            <person name="McVean G."/>
            <person name="Ross M.T."/>
            <person name="Harrow J."/>
            <person name="Olson M.V."/>
            <person name="Beck S."/>
            <person name="Rogers J."/>
            <person name="Bentley D.R."/>
        </authorList>
    </citation>
    <scope>NUCLEOTIDE SEQUENCE [LARGE SCALE GENOMIC DNA]</scope>
</reference>
<reference key="3">
    <citation type="journal article" date="2004" name="Genome Res.">
        <title>The status, quality, and expansion of the NIH full-length cDNA project: the Mammalian Gene Collection (MGC).</title>
        <authorList>
            <consortium name="The MGC Project Team"/>
        </authorList>
    </citation>
    <scope>NUCLEOTIDE SEQUENCE [LARGE SCALE MRNA] (ISOFORM 3)</scope>
    <scope>VARIANT LYS-47</scope>
    <source>
        <tissue>Brain</tissue>
    </source>
</reference>